<gene>
    <name evidence="1" type="primary">thrS</name>
    <name type="ordered locus">SAR1762</name>
</gene>
<accession>Q6GG23</accession>
<dbReference type="EC" id="6.1.1.3" evidence="1"/>
<dbReference type="EMBL" id="BX571856">
    <property type="protein sequence ID" value="CAG40753.1"/>
    <property type="molecule type" value="Genomic_DNA"/>
</dbReference>
<dbReference type="RefSeq" id="WP_000435132.1">
    <property type="nucleotide sequence ID" value="NC_002952.2"/>
</dbReference>
<dbReference type="SMR" id="Q6GG23"/>
<dbReference type="KEGG" id="sar:SAR1762"/>
<dbReference type="HOGENOM" id="CLU_008554_0_1_9"/>
<dbReference type="Proteomes" id="UP000000596">
    <property type="component" value="Chromosome"/>
</dbReference>
<dbReference type="GO" id="GO:0005737">
    <property type="term" value="C:cytoplasm"/>
    <property type="evidence" value="ECO:0007669"/>
    <property type="project" value="UniProtKB-SubCell"/>
</dbReference>
<dbReference type="GO" id="GO:0005524">
    <property type="term" value="F:ATP binding"/>
    <property type="evidence" value="ECO:0007669"/>
    <property type="project" value="UniProtKB-UniRule"/>
</dbReference>
<dbReference type="GO" id="GO:0140096">
    <property type="term" value="F:catalytic activity, acting on a protein"/>
    <property type="evidence" value="ECO:0007669"/>
    <property type="project" value="UniProtKB-ARBA"/>
</dbReference>
<dbReference type="GO" id="GO:0046872">
    <property type="term" value="F:metal ion binding"/>
    <property type="evidence" value="ECO:0007669"/>
    <property type="project" value="UniProtKB-KW"/>
</dbReference>
<dbReference type="GO" id="GO:0004829">
    <property type="term" value="F:threonine-tRNA ligase activity"/>
    <property type="evidence" value="ECO:0007669"/>
    <property type="project" value="UniProtKB-UniRule"/>
</dbReference>
<dbReference type="GO" id="GO:0016740">
    <property type="term" value="F:transferase activity"/>
    <property type="evidence" value="ECO:0007669"/>
    <property type="project" value="UniProtKB-ARBA"/>
</dbReference>
<dbReference type="GO" id="GO:0000049">
    <property type="term" value="F:tRNA binding"/>
    <property type="evidence" value="ECO:0007669"/>
    <property type="project" value="UniProtKB-KW"/>
</dbReference>
<dbReference type="GO" id="GO:0006435">
    <property type="term" value="P:threonyl-tRNA aminoacylation"/>
    <property type="evidence" value="ECO:0007669"/>
    <property type="project" value="UniProtKB-UniRule"/>
</dbReference>
<dbReference type="CDD" id="cd01667">
    <property type="entry name" value="TGS_ThrRS"/>
    <property type="match status" value="1"/>
</dbReference>
<dbReference type="CDD" id="cd00860">
    <property type="entry name" value="ThrRS_anticodon"/>
    <property type="match status" value="1"/>
</dbReference>
<dbReference type="CDD" id="cd00771">
    <property type="entry name" value="ThrRS_core"/>
    <property type="match status" value="1"/>
</dbReference>
<dbReference type="FunFam" id="3.10.20.30:FF:000005">
    <property type="entry name" value="Threonine--tRNA ligase"/>
    <property type="match status" value="1"/>
</dbReference>
<dbReference type="FunFam" id="3.30.54.20:FF:000002">
    <property type="entry name" value="Threonine--tRNA ligase"/>
    <property type="match status" value="1"/>
</dbReference>
<dbReference type="FunFam" id="3.30.930.10:FF:000002">
    <property type="entry name" value="Threonine--tRNA ligase"/>
    <property type="match status" value="1"/>
</dbReference>
<dbReference type="FunFam" id="3.40.50.800:FF:000001">
    <property type="entry name" value="Threonine--tRNA ligase"/>
    <property type="match status" value="1"/>
</dbReference>
<dbReference type="FunFam" id="3.30.980.10:FF:000005">
    <property type="entry name" value="Threonyl-tRNA synthetase, mitochondrial"/>
    <property type="match status" value="1"/>
</dbReference>
<dbReference type="Gene3D" id="3.10.20.30">
    <property type="match status" value="1"/>
</dbReference>
<dbReference type="Gene3D" id="3.30.54.20">
    <property type="match status" value="1"/>
</dbReference>
<dbReference type="Gene3D" id="3.40.50.800">
    <property type="entry name" value="Anticodon-binding domain"/>
    <property type="match status" value="1"/>
</dbReference>
<dbReference type="Gene3D" id="3.30.930.10">
    <property type="entry name" value="Bira Bifunctional Protein, Domain 2"/>
    <property type="match status" value="1"/>
</dbReference>
<dbReference type="Gene3D" id="3.30.980.10">
    <property type="entry name" value="Threonyl-trna Synthetase, Chain A, domain 2"/>
    <property type="match status" value="1"/>
</dbReference>
<dbReference type="HAMAP" id="MF_00184">
    <property type="entry name" value="Thr_tRNA_synth"/>
    <property type="match status" value="1"/>
</dbReference>
<dbReference type="InterPro" id="IPR002314">
    <property type="entry name" value="aa-tRNA-synt_IIb"/>
</dbReference>
<dbReference type="InterPro" id="IPR006195">
    <property type="entry name" value="aa-tRNA-synth_II"/>
</dbReference>
<dbReference type="InterPro" id="IPR045864">
    <property type="entry name" value="aa-tRNA-synth_II/BPL/LPL"/>
</dbReference>
<dbReference type="InterPro" id="IPR004154">
    <property type="entry name" value="Anticodon-bd"/>
</dbReference>
<dbReference type="InterPro" id="IPR036621">
    <property type="entry name" value="Anticodon-bd_dom_sf"/>
</dbReference>
<dbReference type="InterPro" id="IPR012675">
    <property type="entry name" value="Beta-grasp_dom_sf"/>
</dbReference>
<dbReference type="InterPro" id="IPR004095">
    <property type="entry name" value="TGS"/>
</dbReference>
<dbReference type="InterPro" id="IPR012676">
    <property type="entry name" value="TGS-like"/>
</dbReference>
<dbReference type="InterPro" id="IPR002320">
    <property type="entry name" value="Thr-tRNA-ligase_IIa"/>
</dbReference>
<dbReference type="InterPro" id="IPR018163">
    <property type="entry name" value="Thr/Ala-tRNA-synth_IIc_edit"/>
</dbReference>
<dbReference type="InterPro" id="IPR047246">
    <property type="entry name" value="ThrRS_anticodon"/>
</dbReference>
<dbReference type="InterPro" id="IPR033728">
    <property type="entry name" value="ThrRS_core"/>
</dbReference>
<dbReference type="InterPro" id="IPR012947">
    <property type="entry name" value="tRNA_SAD"/>
</dbReference>
<dbReference type="NCBIfam" id="TIGR00418">
    <property type="entry name" value="thrS"/>
    <property type="match status" value="1"/>
</dbReference>
<dbReference type="PANTHER" id="PTHR11451:SF56">
    <property type="entry name" value="THREONINE--TRNA LIGASE 1"/>
    <property type="match status" value="1"/>
</dbReference>
<dbReference type="PANTHER" id="PTHR11451">
    <property type="entry name" value="THREONINE-TRNA LIGASE"/>
    <property type="match status" value="1"/>
</dbReference>
<dbReference type="Pfam" id="PF03129">
    <property type="entry name" value="HGTP_anticodon"/>
    <property type="match status" value="1"/>
</dbReference>
<dbReference type="Pfam" id="PF02824">
    <property type="entry name" value="TGS"/>
    <property type="match status" value="1"/>
</dbReference>
<dbReference type="Pfam" id="PF00587">
    <property type="entry name" value="tRNA-synt_2b"/>
    <property type="match status" value="1"/>
</dbReference>
<dbReference type="Pfam" id="PF07973">
    <property type="entry name" value="tRNA_SAD"/>
    <property type="match status" value="1"/>
</dbReference>
<dbReference type="PRINTS" id="PR01047">
    <property type="entry name" value="TRNASYNTHTHR"/>
</dbReference>
<dbReference type="SMART" id="SM00863">
    <property type="entry name" value="tRNA_SAD"/>
    <property type="match status" value="1"/>
</dbReference>
<dbReference type="SUPFAM" id="SSF52954">
    <property type="entry name" value="Class II aaRS ABD-related"/>
    <property type="match status" value="1"/>
</dbReference>
<dbReference type="SUPFAM" id="SSF55681">
    <property type="entry name" value="Class II aaRS and biotin synthetases"/>
    <property type="match status" value="1"/>
</dbReference>
<dbReference type="SUPFAM" id="SSF81271">
    <property type="entry name" value="TGS-like"/>
    <property type="match status" value="1"/>
</dbReference>
<dbReference type="SUPFAM" id="SSF55186">
    <property type="entry name" value="ThrRS/AlaRS common domain"/>
    <property type="match status" value="1"/>
</dbReference>
<dbReference type="PROSITE" id="PS50862">
    <property type="entry name" value="AA_TRNA_LIGASE_II"/>
    <property type="match status" value="1"/>
</dbReference>
<dbReference type="PROSITE" id="PS51880">
    <property type="entry name" value="TGS"/>
    <property type="match status" value="1"/>
</dbReference>
<keyword id="KW-0030">Aminoacyl-tRNA synthetase</keyword>
<keyword id="KW-0067">ATP-binding</keyword>
<keyword id="KW-0963">Cytoplasm</keyword>
<keyword id="KW-0436">Ligase</keyword>
<keyword id="KW-0479">Metal-binding</keyword>
<keyword id="KW-0547">Nucleotide-binding</keyword>
<keyword id="KW-0648">Protein biosynthesis</keyword>
<keyword id="KW-0694">RNA-binding</keyword>
<keyword id="KW-0820">tRNA-binding</keyword>
<keyword id="KW-0862">Zinc</keyword>
<sequence>MEQINIQFPDGNKKAFDKGTTTEDIAQSISPGLRKKAVAGKFNGQLVDLTKPLETDGSIEIVTPGSEEALEVLRHSTAHLMAHAIKRLYGNVKFGVGPVIEGGFYYDFDIDQNISSDDFEQIEKTMKQIVNENMKIERKVVSRDEAKELFSNDEYKLELIDAIPEDENVTLYSQGDFTDLCRGVHVPSTAKIKEFKLLSTAGAYWRGDSNNKMLQRIYGTAFFDKKELKAHLQMLEERKERDHRKIGKELELFTNSQLVGAGLPLWLPNGATIRREIERYIVDKEVSMGYDHVYTPVLANVDLYKTSGHWDHYQEDMFPPMQLDETESMVLRPMNCPHHMMIYANKPHSYRELPIRIAELGTMHRYEASGAVSGLQRVRGMTLNDSHIFVRPDQIKEEFKRVVNMIIDVYKDFGFEDYSFRLSYRDPEDKEKYFDDDDMWNKAENMLKEAADELGLSYEEAIGEAAFYGPKLDVQVKTAMGKEETLSTAQLDFLLPERFDLTYIGQDGEHHRPVVIHRGVVSTMERFVAFLTEETKGAFPTWLAPKQVQIIPVNVDLHYDYARQLQDELKSQGVRVSIDDRNEKMGYKIREAQMQKIPYQIVVGDKEVENNQVNVRQYGSQDQETVEKDEFIWNLVDEIRLKKHR</sequence>
<comment type="function">
    <text evidence="1">Catalyzes the attachment of threonine to tRNA(Thr) in a two-step reaction: L-threonine is first activated by ATP to form Thr-AMP and then transferred to the acceptor end of tRNA(Thr). Also edits incorrectly charged L-seryl-tRNA(Thr).</text>
</comment>
<comment type="catalytic activity">
    <reaction evidence="1">
        <text>tRNA(Thr) + L-threonine + ATP = L-threonyl-tRNA(Thr) + AMP + diphosphate + H(+)</text>
        <dbReference type="Rhea" id="RHEA:24624"/>
        <dbReference type="Rhea" id="RHEA-COMP:9670"/>
        <dbReference type="Rhea" id="RHEA-COMP:9704"/>
        <dbReference type="ChEBI" id="CHEBI:15378"/>
        <dbReference type="ChEBI" id="CHEBI:30616"/>
        <dbReference type="ChEBI" id="CHEBI:33019"/>
        <dbReference type="ChEBI" id="CHEBI:57926"/>
        <dbReference type="ChEBI" id="CHEBI:78442"/>
        <dbReference type="ChEBI" id="CHEBI:78534"/>
        <dbReference type="ChEBI" id="CHEBI:456215"/>
        <dbReference type="EC" id="6.1.1.3"/>
    </reaction>
</comment>
<comment type="cofactor">
    <cofactor evidence="1">
        <name>Zn(2+)</name>
        <dbReference type="ChEBI" id="CHEBI:29105"/>
    </cofactor>
    <text evidence="1">Binds 1 zinc ion per subunit.</text>
</comment>
<comment type="subunit">
    <text evidence="1">Homodimer.</text>
</comment>
<comment type="subcellular location">
    <subcellularLocation>
        <location evidence="1">Cytoplasm</location>
    </subcellularLocation>
</comment>
<comment type="similarity">
    <text evidence="1">Belongs to the class-II aminoacyl-tRNA synthetase family.</text>
</comment>
<protein>
    <recommendedName>
        <fullName evidence="1">Threonine--tRNA ligase</fullName>
        <ecNumber evidence="1">6.1.1.3</ecNumber>
    </recommendedName>
    <alternativeName>
        <fullName evidence="1">Threonyl-tRNA synthetase</fullName>
        <shortName evidence="1">ThrRS</shortName>
    </alternativeName>
</protein>
<proteinExistence type="inferred from homology"/>
<feature type="chain" id="PRO_0000101050" description="Threonine--tRNA ligase">
    <location>
        <begin position="1"/>
        <end position="645"/>
    </location>
</feature>
<feature type="domain" description="TGS" evidence="2">
    <location>
        <begin position="1"/>
        <end position="63"/>
    </location>
</feature>
<feature type="region of interest" description="Catalytic" evidence="1">
    <location>
        <begin position="242"/>
        <end position="540"/>
    </location>
</feature>
<feature type="binding site" evidence="1">
    <location>
        <position position="336"/>
    </location>
    <ligand>
        <name>Zn(2+)</name>
        <dbReference type="ChEBI" id="CHEBI:29105"/>
    </ligand>
</feature>
<feature type="binding site" evidence="1">
    <location>
        <position position="387"/>
    </location>
    <ligand>
        <name>Zn(2+)</name>
        <dbReference type="ChEBI" id="CHEBI:29105"/>
    </ligand>
</feature>
<feature type="binding site" evidence="1">
    <location>
        <position position="517"/>
    </location>
    <ligand>
        <name>Zn(2+)</name>
        <dbReference type="ChEBI" id="CHEBI:29105"/>
    </ligand>
</feature>
<reference key="1">
    <citation type="journal article" date="2004" name="Proc. Natl. Acad. Sci. U.S.A.">
        <title>Complete genomes of two clinical Staphylococcus aureus strains: evidence for the rapid evolution of virulence and drug resistance.</title>
        <authorList>
            <person name="Holden M.T.G."/>
            <person name="Feil E.J."/>
            <person name="Lindsay J.A."/>
            <person name="Peacock S.J."/>
            <person name="Day N.P.J."/>
            <person name="Enright M.C."/>
            <person name="Foster T.J."/>
            <person name="Moore C.E."/>
            <person name="Hurst L."/>
            <person name="Atkin R."/>
            <person name="Barron A."/>
            <person name="Bason N."/>
            <person name="Bentley S.D."/>
            <person name="Chillingworth C."/>
            <person name="Chillingworth T."/>
            <person name="Churcher C."/>
            <person name="Clark L."/>
            <person name="Corton C."/>
            <person name="Cronin A."/>
            <person name="Doggett J."/>
            <person name="Dowd L."/>
            <person name="Feltwell T."/>
            <person name="Hance Z."/>
            <person name="Harris B."/>
            <person name="Hauser H."/>
            <person name="Holroyd S."/>
            <person name="Jagels K."/>
            <person name="James K.D."/>
            <person name="Lennard N."/>
            <person name="Line A."/>
            <person name="Mayes R."/>
            <person name="Moule S."/>
            <person name="Mungall K."/>
            <person name="Ormond D."/>
            <person name="Quail M.A."/>
            <person name="Rabbinowitsch E."/>
            <person name="Rutherford K.M."/>
            <person name="Sanders M."/>
            <person name="Sharp S."/>
            <person name="Simmonds M."/>
            <person name="Stevens K."/>
            <person name="Whitehead S."/>
            <person name="Barrell B.G."/>
            <person name="Spratt B.G."/>
            <person name="Parkhill J."/>
        </authorList>
    </citation>
    <scope>NUCLEOTIDE SEQUENCE [LARGE SCALE GENOMIC DNA]</scope>
    <source>
        <strain>MRSA252</strain>
    </source>
</reference>
<organism>
    <name type="scientific">Staphylococcus aureus (strain MRSA252)</name>
    <dbReference type="NCBI Taxonomy" id="282458"/>
    <lineage>
        <taxon>Bacteria</taxon>
        <taxon>Bacillati</taxon>
        <taxon>Bacillota</taxon>
        <taxon>Bacilli</taxon>
        <taxon>Bacillales</taxon>
        <taxon>Staphylococcaceae</taxon>
        <taxon>Staphylococcus</taxon>
    </lineage>
</organism>
<name>SYT_STAAR</name>
<evidence type="ECO:0000255" key="1">
    <source>
        <dbReference type="HAMAP-Rule" id="MF_00184"/>
    </source>
</evidence>
<evidence type="ECO:0000255" key="2">
    <source>
        <dbReference type="PROSITE-ProRule" id="PRU01228"/>
    </source>
</evidence>